<comment type="catalytic activity">
    <reaction evidence="1">
        <text>beta-D-fructose 1,6-bisphosphate + H2O = beta-D-fructose 6-phosphate + phosphate</text>
        <dbReference type="Rhea" id="RHEA:11064"/>
        <dbReference type="ChEBI" id="CHEBI:15377"/>
        <dbReference type="ChEBI" id="CHEBI:32966"/>
        <dbReference type="ChEBI" id="CHEBI:43474"/>
        <dbReference type="ChEBI" id="CHEBI:57634"/>
        <dbReference type="EC" id="3.1.3.11"/>
    </reaction>
</comment>
<comment type="cofactor">
    <cofactor evidence="1">
        <name>Mn(2+)</name>
        <dbReference type="ChEBI" id="CHEBI:29035"/>
    </cofactor>
</comment>
<comment type="pathway">
    <text evidence="1">Carbohydrate biosynthesis; gluconeogenesis.</text>
</comment>
<comment type="similarity">
    <text evidence="1">Belongs to the FBPase class 3 family.</text>
</comment>
<sequence>MTLYDENNLHIIKDNLRYLKLLSKQYPSISSASSEIINLQAILNLPKGTEHFISDVHGEYESFTHMLKNASGVIKRKIDDVFGTSLRECDKKNLATLIYYPEQKLDLIKKSEKNLEDWYKITLYRLIRLCQIVSSKYTRSKVRKSLPSDFAYIIEELLNEQGDRVDKQEYYNSIIETIIDIDRASEFIIAISNVIQRLVVDKLHIIGDIYDRGPGAEIIIEALSKHHSIDIQWGNHDIVWMGAAAGCEACIANVIRISLRYANLSTLEDGYGINLLPLATFAMDFYKEDNCENFKPRTIDKNLNETDIKLLSKMHKAISIIQFKLEGKIIKRRPEFKMEERLLLDKINIKEGTLSLNEKIYKLIDTNFPTLDKENPYELNERERDLVEKLTNSFINSEKLQRHIKFLYSNGSLYLKYNSNLLYHGCIPLNEDGSLKEVTLCKETLKGKSLLDKLDRLAREAYFFKKDPESKLYGMDMMWYLWCGSNSPLFGKKKMTTFERYFLDDKNTHKEEKNPYYKYRNDEKMCTMIFEEFELDADNSHIINGHIPVKTKEGENPIKANGKLLVIDGGFCKAYQPQTGIAGYTLIYNSYGLLLTSHEPFSSIHKAIVEGNDILSSTTILEHVSSRKRVLDTDSGEEIKKQIHDLEMLLVAYRKGLIKEENEANIRF</sequence>
<organism>
    <name type="scientific">Clostridium botulinum (strain Langeland / NCTC 10281 / Type F)</name>
    <dbReference type="NCBI Taxonomy" id="441772"/>
    <lineage>
        <taxon>Bacteria</taxon>
        <taxon>Bacillati</taxon>
        <taxon>Bacillota</taxon>
        <taxon>Clostridia</taxon>
        <taxon>Eubacteriales</taxon>
        <taxon>Clostridiaceae</taxon>
        <taxon>Clostridium</taxon>
    </lineage>
</organism>
<evidence type="ECO:0000255" key="1">
    <source>
        <dbReference type="HAMAP-Rule" id="MF_01854"/>
    </source>
</evidence>
<keyword id="KW-0119">Carbohydrate metabolism</keyword>
<keyword id="KW-0378">Hydrolase</keyword>
<keyword id="KW-0464">Manganese</keyword>
<protein>
    <recommendedName>
        <fullName evidence="1">Fructose-1,6-bisphosphatase class 3</fullName>
        <shortName evidence="1">FBPase class 3</shortName>
        <ecNumber evidence="1">3.1.3.11</ecNumber>
    </recommendedName>
    <alternativeName>
        <fullName evidence="1">D-fructose-1,6-bisphosphate 1-phosphohydrolase class 3</fullName>
    </alternativeName>
</protein>
<accession>A7GAS1</accession>
<reference key="1">
    <citation type="submission" date="2007-06" db="EMBL/GenBank/DDBJ databases">
        <authorList>
            <person name="Brinkac L.M."/>
            <person name="Daugherty S."/>
            <person name="Dodson R.J."/>
            <person name="Madupu R."/>
            <person name="Brown J.L."/>
            <person name="Bruce D."/>
            <person name="Detter C."/>
            <person name="Munk C."/>
            <person name="Smith L.A."/>
            <person name="Smith T.J."/>
            <person name="White O."/>
            <person name="Brettin T.S."/>
        </authorList>
    </citation>
    <scope>NUCLEOTIDE SEQUENCE [LARGE SCALE GENOMIC DNA]</scope>
    <source>
        <strain>Langeland / NCTC 10281 / Type F</strain>
    </source>
</reference>
<gene>
    <name evidence="1" type="primary">fbp</name>
    <name type="ordered locus">CLI_0596</name>
</gene>
<dbReference type="EC" id="3.1.3.11" evidence="1"/>
<dbReference type="EMBL" id="CP000728">
    <property type="protein sequence ID" value="ABS42215.1"/>
    <property type="molecule type" value="Genomic_DNA"/>
</dbReference>
<dbReference type="RefSeq" id="WP_011987500.1">
    <property type="nucleotide sequence ID" value="NC_009699.1"/>
</dbReference>
<dbReference type="KEGG" id="cbf:CLI_0596"/>
<dbReference type="HOGENOM" id="CLU_028392_2_0_9"/>
<dbReference type="UniPathway" id="UPA00138"/>
<dbReference type="Proteomes" id="UP000002410">
    <property type="component" value="Chromosome"/>
</dbReference>
<dbReference type="GO" id="GO:0042132">
    <property type="term" value="F:fructose 1,6-bisphosphate 1-phosphatase activity"/>
    <property type="evidence" value="ECO:0007669"/>
    <property type="project" value="UniProtKB-UniRule"/>
</dbReference>
<dbReference type="GO" id="GO:0006094">
    <property type="term" value="P:gluconeogenesis"/>
    <property type="evidence" value="ECO:0007669"/>
    <property type="project" value="UniProtKB-UniRule"/>
</dbReference>
<dbReference type="Gene3D" id="3.60.21.10">
    <property type="match status" value="1"/>
</dbReference>
<dbReference type="HAMAP" id="MF_01854">
    <property type="entry name" value="FBPase_class3"/>
    <property type="match status" value="1"/>
</dbReference>
<dbReference type="InterPro" id="IPR009164">
    <property type="entry name" value="FBPtase_class3"/>
</dbReference>
<dbReference type="InterPro" id="IPR029052">
    <property type="entry name" value="Metallo-depent_PP-like"/>
</dbReference>
<dbReference type="Pfam" id="PF06874">
    <property type="entry name" value="FBPase_2"/>
    <property type="match status" value="1"/>
</dbReference>
<dbReference type="PIRSF" id="PIRSF000906">
    <property type="entry name" value="FBPtase_Bacill"/>
    <property type="match status" value="1"/>
</dbReference>
<dbReference type="SUPFAM" id="SSF56300">
    <property type="entry name" value="Metallo-dependent phosphatases"/>
    <property type="match status" value="1"/>
</dbReference>
<feature type="chain" id="PRO_0000363084" description="Fructose-1,6-bisphosphatase class 3">
    <location>
        <begin position="1"/>
        <end position="668"/>
    </location>
</feature>
<name>F16PC_CLOBL</name>
<proteinExistence type="inferred from homology"/>